<keyword id="KW-0320">Glycogen biosynthesis</keyword>
<keyword id="KW-0328">Glycosyltransferase</keyword>
<keyword id="KW-1185">Reference proteome</keyword>
<keyword id="KW-0808">Transferase</keyword>
<organism>
    <name type="scientific">Bacillus subtilis (strain 168)</name>
    <dbReference type="NCBI Taxonomy" id="224308"/>
    <lineage>
        <taxon>Bacteria</taxon>
        <taxon>Bacillati</taxon>
        <taxon>Bacillota</taxon>
        <taxon>Bacilli</taxon>
        <taxon>Bacillales</taxon>
        <taxon>Bacillaceae</taxon>
        <taxon>Bacillus</taxon>
    </lineage>
</organism>
<name>GLGA_BACSU</name>
<accession>P39125</accession>
<dbReference type="EC" id="2.4.1.21"/>
<dbReference type="EMBL" id="Z25795">
    <property type="protein sequence ID" value="CAA81043.1"/>
    <property type="molecule type" value="Genomic_DNA"/>
</dbReference>
<dbReference type="EMBL" id="AF008220">
    <property type="protein sequence ID" value="AAC00217.1"/>
    <property type="molecule type" value="Genomic_DNA"/>
</dbReference>
<dbReference type="EMBL" id="AL009126">
    <property type="protein sequence ID" value="CAB15073.1"/>
    <property type="molecule type" value="Genomic_DNA"/>
</dbReference>
<dbReference type="PIR" id="S40051">
    <property type="entry name" value="S40051"/>
</dbReference>
<dbReference type="RefSeq" id="NP_390973.1">
    <property type="nucleotide sequence ID" value="NC_000964.3"/>
</dbReference>
<dbReference type="RefSeq" id="WP_003246015.1">
    <property type="nucleotide sequence ID" value="NZ_OZ025638.1"/>
</dbReference>
<dbReference type="SMR" id="P39125"/>
<dbReference type="FunCoup" id="P39125">
    <property type="interactions" value="157"/>
</dbReference>
<dbReference type="STRING" id="224308.BSU30950"/>
<dbReference type="CAZy" id="GT5">
    <property type="family name" value="Glycosyltransferase Family 5"/>
</dbReference>
<dbReference type="PaxDb" id="224308-BSU30950"/>
<dbReference type="EnsemblBacteria" id="CAB15073">
    <property type="protein sequence ID" value="CAB15073"/>
    <property type="gene ID" value="BSU_30950"/>
</dbReference>
<dbReference type="GeneID" id="936781"/>
<dbReference type="KEGG" id="bsu:BSU30950"/>
<dbReference type="PATRIC" id="fig|224308.179.peg.3354"/>
<dbReference type="eggNOG" id="COG0297">
    <property type="taxonomic scope" value="Bacteria"/>
</dbReference>
<dbReference type="InParanoid" id="P39125"/>
<dbReference type="OrthoDB" id="9808590at2"/>
<dbReference type="PhylomeDB" id="P39125"/>
<dbReference type="BioCyc" id="BSUB:BSU30950-MONOMER"/>
<dbReference type="UniPathway" id="UPA00164"/>
<dbReference type="Proteomes" id="UP000001570">
    <property type="component" value="Chromosome"/>
</dbReference>
<dbReference type="GO" id="GO:0009011">
    <property type="term" value="F:alpha-1,4-glucan glucosyltransferase (ADP-glucose donor) activity"/>
    <property type="evidence" value="ECO:0007669"/>
    <property type="project" value="UniProtKB-UniRule"/>
</dbReference>
<dbReference type="GO" id="GO:0004373">
    <property type="term" value="F:alpha-1,4-glucan glucosyltransferase (UDP-glucose donor) activity"/>
    <property type="evidence" value="ECO:0007669"/>
    <property type="project" value="InterPro"/>
</dbReference>
<dbReference type="GO" id="GO:0005978">
    <property type="term" value="P:glycogen biosynthetic process"/>
    <property type="evidence" value="ECO:0007669"/>
    <property type="project" value="UniProtKB-UniRule"/>
</dbReference>
<dbReference type="CDD" id="cd03791">
    <property type="entry name" value="GT5_Glycogen_synthase_DULL1-like"/>
    <property type="match status" value="1"/>
</dbReference>
<dbReference type="Gene3D" id="3.40.50.2000">
    <property type="entry name" value="Glycogen Phosphorylase B"/>
    <property type="match status" value="2"/>
</dbReference>
<dbReference type="HAMAP" id="MF_00484">
    <property type="entry name" value="Glycogen_synth"/>
    <property type="match status" value="1"/>
</dbReference>
<dbReference type="InterPro" id="IPR001296">
    <property type="entry name" value="Glyco_trans_1"/>
</dbReference>
<dbReference type="InterPro" id="IPR011835">
    <property type="entry name" value="GS/SS"/>
</dbReference>
<dbReference type="InterPro" id="IPR013534">
    <property type="entry name" value="Starch_synth_cat_dom"/>
</dbReference>
<dbReference type="NCBIfam" id="TIGR02095">
    <property type="entry name" value="glgA"/>
    <property type="match status" value="1"/>
</dbReference>
<dbReference type="NCBIfam" id="NF001898">
    <property type="entry name" value="PRK00654.1-1"/>
    <property type="match status" value="1"/>
</dbReference>
<dbReference type="NCBIfam" id="NF001899">
    <property type="entry name" value="PRK00654.1-2"/>
    <property type="match status" value="1"/>
</dbReference>
<dbReference type="PANTHER" id="PTHR45825:SF11">
    <property type="entry name" value="ALPHA AMYLASE DOMAIN-CONTAINING PROTEIN"/>
    <property type="match status" value="1"/>
</dbReference>
<dbReference type="PANTHER" id="PTHR45825">
    <property type="entry name" value="GRANULE-BOUND STARCH SYNTHASE 1, CHLOROPLASTIC/AMYLOPLASTIC"/>
    <property type="match status" value="1"/>
</dbReference>
<dbReference type="Pfam" id="PF08323">
    <property type="entry name" value="Glyco_transf_5"/>
    <property type="match status" value="1"/>
</dbReference>
<dbReference type="Pfam" id="PF00534">
    <property type="entry name" value="Glycos_transf_1"/>
    <property type="match status" value="1"/>
</dbReference>
<dbReference type="SUPFAM" id="SSF53756">
    <property type="entry name" value="UDP-Glycosyltransferase/glycogen phosphorylase"/>
    <property type="match status" value="1"/>
</dbReference>
<reference key="1">
    <citation type="journal article" date="1994" name="Mol. Microbiol.">
        <title>Glycogen in Bacillus subtilis: molecular characterization of an operon encoding enzymes involved in glycogen biosynthesis and degradation.</title>
        <authorList>
            <person name="Kiel J.A.K.W."/>
            <person name="Boels J.M."/>
            <person name="Beldman G."/>
            <person name="Venema G."/>
        </authorList>
    </citation>
    <scope>NUCLEOTIDE SEQUENCE [GENOMIC DNA]</scope>
    <source>
        <strain>168</strain>
    </source>
</reference>
<reference key="2">
    <citation type="journal article" date="1997" name="Microbiology">
        <title>Sequencing and functional annotation of the Bacillus subtilis genes in the 200 kb rrnB-dnaB region.</title>
        <authorList>
            <person name="Lapidus A."/>
            <person name="Galleron N."/>
            <person name="Sorokin A."/>
            <person name="Ehrlich S.D."/>
        </authorList>
    </citation>
    <scope>NUCLEOTIDE SEQUENCE [GENOMIC DNA]</scope>
    <source>
        <strain>168</strain>
    </source>
</reference>
<reference key="3">
    <citation type="journal article" date="1997" name="Nature">
        <title>The complete genome sequence of the Gram-positive bacterium Bacillus subtilis.</title>
        <authorList>
            <person name="Kunst F."/>
            <person name="Ogasawara N."/>
            <person name="Moszer I."/>
            <person name="Albertini A.M."/>
            <person name="Alloni G."/>
            <person name="Azevedo V."/>
            <person name="Bertero M.G."/>
            <person name="Bessieres P."/>
            <person name="Bolotin A."/>
            <person name="Borchert S."/>
            <person name="Borriss R."/>
            <person name="Boursier L."/>
            <person name="Brans A."/>
            <person name="Braun M."/>
            <person name="Brignell S.C."/>
            <person name="Bron S."/>
            <person name="Brouillet S."/>
            <person name="Bruschi C.V."/>
            <person name="Caldwell B."/>
            <person name="Capuano V."/>
            <person name="Carter N.M."/>
            <person name="Choi S.-K."/>
            <person name="Codani J.-J."/>
            <person name="Connerton I.F."/>
            <person name="Cummings N.J."/>
            <person name="Daniel R.A."/>
            <person name="Denizot F."/>
            <person name="Devine K.M."/>
            <person name="Duesterhoeft A."/>
            <person name="Ehrlich S.D."/>
            <person name="Emmerson P.T."/>
            <person name="Entian K.-D."/>
            <person name="Errington J."/>
            <person name="Fabret C."/>
            <person name="Ferrari E."/>
            <person name="Foulger D."/>
            <person name="Fritz C."/>
            <person name="Fujita M."/>
            <person name="Fujita Y."/>
            <person name="Fuma S."/>
            <person name="Galizzi A."/>
            <person name="Galleron N."/>
            <person name="Ghim S.-Y."/>
            <person name="Glaser P."/>
            <person name="Goffeau A."/>
            <person name="Golightly E.J."/>
            <person name="Grandi G."/>
            <person name="Guiseppi G."/>
            <person name="Guy B.J."/>
            <person name="Haga K."/>
            <person name="Haiech J."/>
            <person name="Harwood C.R."/>
            <person name="Henaut A."/>
            <person name="Hilbert H."/>
            <person name="Holsappel S."/>
            <person name="Hosono S."/>
            <person name="Hullo M.-F."/>
            <person name="Itaya M."/>
            <person name="Jones L.-M."/>
            <person name="Joris B."/>
            <person name="Karamata D."/>
            <person name="Kasahara Y."/>
            <person name="Klaerr-Blanchard M."/>
            <person name="Klein C."/>
            <person name="Kobayashi Y."/>
            <person name="Koetter P."/>
            <person name="Koningstein G."/>
            <person name="Krogh S."/>
            <person name="Kumano M."/>
            <person name="Kurita K."/>
            <person name="Lapidus A."/>
            <person name="Lardinois S."/>
            <person name="Lauber J."/>
            <person name="Lazarevic V."/>
            <person name="Lee S.-M."/>
            <person name="Levine A."/>
            <person name="Liu H."/>
            <person name="Masuda S."/>
            <person name="Mauel C."/>
            <person name="Medigue C."/>
            <person name="Medina N."/>
            <person name="Mellado R.P."/>
            <person name="Mizuno M."/>
            <person name="Moestl D."/>
            <person name="Nakai S."/>
            <person name="Noback M."/>
            <person name="Noone D."/>
            <person name="O'Reilly M."/>
            <person name="Ogawa K."/>
            <person name="Ogiwara A."/>
            <person name="Oudega B."/>
            <person name="Park S.-H."/>
            <person name="Parro V."/>
            <person name="Pohl T.M."/>
            <person name="Portetelle D."/>
            <person name="Porwollik S."/>
            <person name="Prescott A.M."/>
            <person name="Presecan E."/>
            <person name="Pujic P."/>
            <person name="Purnelle B."/>
            <person name="Rapoport G."/>
            <person name="Rey M."/>
            <person name="Reynolds S."/>
            <person name="Rieger M."/>
            <person name="Rivolta C."/>
            <person name="Rocha E."/>
            <person name="Roche B."/>
            <person name="Rose M."/>
            <person name="Sadaie Y."/>
            <person name="Sato T."/>
            <person name="Scanlan E."/>
            <person name="Schleich S."/>
            <person name="Schroeter R."/>
            <person name="Scoffone F."/>
            <person name="Sekiguchi J."/>
            <person name="Sekowska A."/>
            <person name="Seror S.J."/>
            <person name="Serror P."/>
            <person name="Shin B.-S."/>
            <person name="Soldo B."/>
            <person name="Sorokin A."/>
            <person name="Tacconi E."/>
            <person name="Takagi T."/>
            <person name="Takahashi H."/>
            <person name="Takemaru K."/>
            <person name="Takeuchi M."/>
            <person name="Tamakoshi A."/>
            <person name="Tanaka T."/>
            <person name="Terpstra P."/>
            <person name="Tognoni A."/>
            <person name="Tosato V."/>
            <person name="Uchiyama S."/>
            <person name="Vandenbol M."/>
            <person name="Vannier F."/>
            <person name="Vassarotti A."/>
            <person name="Viari A."/>
            <person name="Wambutt R."/>
            <person name="Wedler E."/>
            <person name="Wedler H."/>
            <person name="Weitzenegger T."/>
            <person name="Winters P."/>
            <person name="Wipat A."/>
            <person name="Yamamoto H."/>
            <person name="Yamane K."/>
            <person name="Yasumoto K."/>
            <person name="Yata K."/>
            <person name="Yoshida K."/>
            <person name="Yoshikawa H.-F."/>
            <person name="Zumstein E."/>
            <person name="Yoshikawa H."/>
            <person name="Danchin A."/>
        </authorList>
    </citation>
    <scope>NUCLEOTIDE SEQUENCE [LARGE SCALE GENOMIC DNA]</scope>
    <source>
        <strain>168</strain>
    </source>
</reference>
<protein>
    <recommendedName>
        <fullName>Glycogen synthase</fullName>
        <ecNumber>2.4.1.21</ecNumber>
    </recommendedName>
    <alternativeName>
        <fullName>Starch [bacterial glycogen] synthase</fullName>
    </alternativeName>
</protein>
<sequence>MKILFAVSECTPFVKSGGLADVAGALPKALARLGNEVAVMLPKYSQIPEPWKKRMKKQAECTVAVGWRQQYCGIEHMAENDVNYYFIDNEYYFNRDSLYGHYDDGERFAFFSRAVLEAAKVVNVQADIVHTHDWHTAMVNYLLKEEYRKHPFYERMKSVLTIHNLQFQGIFPPDVTHDLLGLEMDHFHYERLECNGFVNFMKAGIIAADHVTTVSPTYRNEIMTPYYGEQLEQVLQYREDDVTGILNGIDDTFYQPKSDPYIEAQYDSGDLACKLENKTKLQQRMGLPEKNDIPLISMVTRLTKQKGLDLVRRIMHELLEEQDIQLVVLGTGEREFEDYFRYAEFAFHEKCRAYIGFDEPLAHQIYAGSDMFLMPSKFEPCGLGQLIALQYGAIPIVRETGGLYDTVRAYQEEEGTGNGFTFSAFNAHDLKFTIERALSFYCQQDVWKSIVKTAMNADYSWGKSAKEYQRIFEQVTRSGRDVLE</sequence>
<feature type="chain" id="PRO_0000188597" description="Glycogen synthase">
    <location>
        <begin position="1"/>
        <end position="484"/>
    </location>
</feature>
<feature type="binding site" evidence="1">
    <location>
        <position position="15"/>
    </location>
    <ligand>
        <name>ADP-alpha-D-glucose</name>
        <dbReference type="ChEBI" id="CHEBI:57498"/>
    </ligand>
</feature>
<gene>
    <name type="primary">glgA</name>
    <name type="ordered locus">BSU30950</name>
</gene>
<evidence type="ECO:0000250" key="1"/>
<evidence type="ECO:0000305" key="2"/>
<proteinExistence type="evidence at transcript level"/>
<comment type="function">
    <text>Synthesizes alpha-1,4-glucan chains using ADP-glucose.</text>
</comment>
<comment type="catalytic activity">
    <reaction>
        <text>[(1-&gt;4)-alpha-D-glucosyl](n) + ADP-alpha-D-glucose = [(1-&gt;4)-alpha-D-glucosyl](n+1) + ADP + H(+)</text>
        <dbReference type="Rhea" id="RHEA:18189"/>
        <dbReference type="Rhea" id="RHEA-COMP:9584"/>
        <dbReference type="Rhea" id="RHEA-COMP:9587"/>
        <dbReference type="ChEBI" id="CHEBI:15378"/>
        <dbReference type="ChEBI" id="CHEBI:15444"/>
        <dbReference type="ChEBI" id="CHEBI:57498"/>
        <dbReference type="ChEBI" id="CHEBI:456216"/>
        <dbReference type="EC" id="2.4.1.21"/>
    </reaction>
</comment>
<comment type="pathway">
    <text>Glycan biosynthesis; glycogen biosynthesis.</text>
</comment>
<comment type="induction">
    <text>Expressed exclusively on media containing carbon sources that allow efficient sporulation.</text>
</comment>
<comment type="similarity">
    <text evidence="2">Belongs to the glycosyltransferase 1 family. Bacterial/plant glycogen synthase subfamily.</text>
</comment>